<comment type="function">
    <text evidence="1">Responsible for the low-affinity transport of potassium into the cell. Likely operates as a K(+):H(+) symporter.</text>
</comment>
<comment type="catalytic activity">
    <reaction evidence="1">
        <text>K(+)(in) + H(+)(in) = K(+)(out) + H(+)(out)</text>
        <dbReference type="Rhea" id="RHEA:28490"/>
        <dbReference type="ChEBI" id="CHEBI:15378"/>
        <dbReference type="ChEBI" id="CHEBI:29103"/>
    </reaction>
    <physiologicalReaction direction="right-to-left" evidence="1">
        <dbReference type="Rhea" id="RHEA:28492"/>
    </physiologicalReaction>
</comment>
<comment type="subcellular location">
    <subcellularLocation>
        <location evidence="1">Cell inner membrane</location>
        <topology evidence="1">Multi-pass membrane protein</topology>
    </subcellularLocation>
</comment>
<comment type="similarity">
    <text evidence="1">Belongs to the HAK/KUP transporter (TC 2.A.72) family.</text>
</comment>
<accession>A9MJQ3</accession>
<feature type="chain" id="PRO_1000087560" description="Low affinity potassium transport system protein Kup">
    <location>
        <begin position="1"/>
        <end position="622"/>
    </location>
</feature>
<feature type="transmembrane region" description="Helical" evidence="1">
    <location>
        <begin position="9"/>
        <end position="29"/>
    </location>
</feature>
<feature type="transmembrane region" description="Helical" evidence="1">
    <location>
        <begin position="49"/>
        <end position="69"/>
    </location>
</feature>
<feature type="transmembrane region" description="Helical" evidence="1">
    <location>
        <begin position="103"/>
        <end position="123"/>
    </location>
</feature>
<feature type="transmembrane region" description="Helical" evidence="1">
    <location>
        <begin position="137"/>
        <end position="157"/>
    </location>
</feature>
<feature type="transmembrane region" description="Helical" evidence="1">
    <location>
        <begin position="165"/>
        <end position="185"/>
    </location>
</feature>
<feature type="transmembrane region" description="Helical" evidence="1">
    <location>
        <begin position="213"/>
        <end position="233"/>
    </location>
</feature>
<feature type="transmembrane region" description="Helical" evidence="1">
    <location>
        <begin position="247"/>
        <end position="267"/>
    </location>
</feature>
<feature type="transmembrane region" description="Helical" evidence="1">
    <location>
        <begin position="276"/>
        <end position="296"/>
    </location>
</feature>
<feature type="transmembrane region" description="Helical" evidence="1">
    <location>
        <begin position="337"/>
        <end position="357"/>
    </location>
</feature>
<feature type="transmembrane region" description="Helical" evidence="1">
    <location>
        <begin position="363"/>
        <end position="383"/>
    </location>
</feature>
<feature type="transmembrane region" description="Helical" evidence="1">
    <location>
        <begin position="396"/>
        <end position="416"/>
    </location>
</feature>
<feature type="transmembrane region" description="Helical" evidence="1">
    <location>
        <begin position="419"/>
        <end position="439"/>
    </location>
</feature>
<sequence>MSTDNKQSLPAITLAAIGVVYGDIGTSPLYTLRECLSGQFGFGVERDAVFGFLSLIFWLLIFVVSIKYLTFVMRADNAGEGGILTLMSLAGRNTSARTTSMLVIMGLIGGSFFYGEVVITPAISVMSAIEGLEIVAPQLDTWIVPLSIVVLTLLFMIQKHGTGMVGKLFAPIMLTWFLILAVLGLRSIIANPEVLHALNPVWAVRFFLEYKTVSFIALGAVVLSITGVEALYADMGHFGKFPIRLAWFTVVLPSLVLNYFGQGALLLKHPEAIKNPFFLLAPDWALIPLLILAALATVIASQAVISGVFSLTRQAVRLGYLSPMRIIHTSEMESGQIYIPFVNWLLYFAVVVVIVSFEHSSNLAAAYGIAVTGTMVLTSILSTTVARKNWHWNKYLVALILVAFLCVDIPLFSANLDKLLSGGWLPLSLGLIMFTIMTTWKSERFRLLRRMHEHGNSLEAMIASLEKSPPVRVPGTAVYMSRVLNVIPFALLHNLKHNKVLHERVILLTLRTEDAPYVHNVRRVQIEQLSPTFWRVVASYGWRETPNVEEVFHRCGLEGLSCRMMETSFFMSHESLIVGKRPWYLRLRGKLYLLLQRNALRAPDQFEIPPNRVIELGTQVEI</sequence>
<protein>
    <recommendedName>
        <fullName evidence="1">Low affinity potassium transport system protein Kup</fullName>
    </recommendedName>
    <alternativeName>
        <fullName evidence="1">Kup system potassium uptake protein</fullName>
    </alternativeName>
</protein>
<reference key="1">
    <citation type="submission" date="2007-11" db="EMBL/GenBank/DDBJ databases">
        <authorList>
            <consortium name="The Salmonella enterica serovar Arizonae Genome Sequencing Project"/>
            <person name="McClelland M."/>
            <person name="Sanderson E.K."/>
            <person name="Porwollik S."/>
            <person name="Spieth J."/>
            <person name="Clifton W.S."/>
            <person name="Fulton R."/>
            <person name="Chunyan W."/>
            <person name="Wollam A."/>
            <person name="Shah N."/>
            <person name="Pepin K."/>
            <person name="Bhonagiri V."/>
            <person name="Nash W."/>
            <person name="Johnson M."/>
            <person name="Thiruvilangam P."/>
            <person name="Wilson R."/>
        </authorList>
    </citation>
    <scope>NUCLEOTIDE SEQUENCE [LARGE SCALE GENOMIC DNA]</scope>
    <source>
        <strain>ATCC BAA-731 / CDC346-86 / RSK2980</strain>
    </source>
</reference>
<organism>
    <name type="scientific">Salmonella arizonae (strain ATCC BAA-731 / CDC346-86 / RSK2980)</name>
    <dbReference type="NCBI Taxonomy" id="41514"/>
    <lineage>
        <taxon>Bacteria</taxon>
        <taxon>Pseudomonadati</taxon>
        <taxon>Pseudomonadota</taxon>
        <taxon>Gammaproteobacteria</taxon>
        <taxon>Enterobacterales</taxon>
        <taxon>Enterobacteriaceae</taxon>
        <taxon>Salmonella</taxon>
    </lineage>
</organism>
<keyword id="KW-0997">Cell inner membrane</keyword>
<keyword id="KW-1003">Cell membrane</keyword>
<keyword id="KW-0406">Ion transport</keyword>
<keyword id="KW-0472">Membrane</keyword>
<keyword id="KW-0630">Potassium</keyword>
<keyword id="KW-0633">Potassium transport</keyword>
<keyword id="KW-1185">Reference proteome</keyword>
<keyword id="KW-0769">Symport</keyword>
<keyword id="KW-0812">Transmembrane</keyword>
<keyword id="KW-1133">Transmembrane helix</keyword>
<keyword id="KW-0813">Transport</keyword>
<dbReference type="EMBL" id="CP000880">
    <property type="protein sequence ID" value="ABX23564.1"/>
    <property type="molecule type" value="Genomic_DNA"/>
</dbReference>
<dbReference type="STRING" id="41514.SARI_03770"/>
<dbReference type="KEGG" id="ses:SARI_03770"/>
<dbReference type="HOGENOM" id="CLU_008142_4_2_6"/>
<dbReference type="Proteomes" id="UP000002084">
    <property type="component" value="Chromosome"/>
</dbReference>
<dbReference type="GO" id="GO:0005886">
    <property type="term" value="C:plasma membrane"/>
    <property type="evidence" value="ECO:0007669"/>
    <property type="project" value="UniProtKB-SubCell"/>
</dbReference>
<dbReference type="GO" id="GO:0015079">
    <property type="term" value="F:potassium ion transmembrane transporter activity"/>
    <property type="evidence" value="ECO:0007669"/>
    <property type="project" value="UniProtKB-UniRule"/>
</dbReference>
<dbReference type="GO" id="GO:0015293">
    <property type="term" value="F:symporter activity"/>
    <property type="evidence" value="ECO:0007669"/>
    <property type="project" value="UniProtKB-UniRule"/>
</dbReference>
<dbReference type="HAMAP" id="MF_01522">
    <property type="entry name" value="Kup"/>
    <property type="match status" value="1"/>
</dbReference>
<dbReference type="InterPro" id="IPR003855">
    <property type="entry name" value="K+_transporter"/>
</dbReference>
<dbReference type="InterPro" id="IPR053952">
    <property type="entry name" value="K_trans_C"/>
</dbReference>
<dbReference type="InterPro" id="IPR053951">
    <property type="entry name" value="K_trans_N"/>
</dbReference>
<dbReference type="InterPro" id="IPR023051">
    <property type="entry name" value="Kup"/>
</dbReference>
<dbReference type="NCBIfam" id="TIGR00794">
    <property type="entry name" value="kup"/>
    <property type="match status" value="1"/>
</dbReference>
<dbReference type="NCBIfam" id="NF008015">
    <property type="entry name" value="PRK10745.1"/>
    <property type="match status" value="1"/>
</dbReference>
<dbReference type="PANTHER" id="PTHR30540:SF79">
    <property type="entry name" value="LOW AFFINITY POTASSIUM TRANSPORT SYSTEM PROTEIN KUP"/>
    <property type="match status" value="1"/>
</dbReference>
<dbReference type="PANTHER" id="PTHR30540">
    <property type="entry name" value="OSMOTIC STRESS POTASSIUM TRANSPORTER"/>
    <property type="match status" value="1"/>
</dbReference>
<dbReference type="Pfam" id="PF02705">
    <property type="entry name" value="K_trans"/>
    <property type="match status" value="1"/>
</dbReference>
<dbReference type="Pfam" id="PF22776">
    <property type="entry name" value="K_trans_C"/>
    <property type="match status" value="1"/>
</dbReference>
<name>KUP_SALAR</name>
<gene>
    <name evidence="1" type="primary">kup</name>
    <name type="ordered locus">SARI_03770</name>
</gene>
<proteinExistence type="inferred from homology"/>
<evidence type="ECO:0000255" key="1">
    <source>
        <dbReference type="HAMAP-Rule" id="MF_01522"/>
    </source>
</evidence>